<keyword id="KW-0002">3D-structure</keyword>
<keyword id="KW-0249">Electron transport</keyword>
<keyword id="KW-0472">Membrane</keyword>
<keyword id="KW-0496">Mitochondrion</keyword>
<keyword id="KW-0999">Mitochondrion inner membrane</keyword>
<keyword id="KW-1185">Reference proteome</keyword>
<keyword id="KW-0679">Respiratory chain</keyword>
<keyword id="KW-0812">Transmembrane</keyword>
<keyword id="KW-1133">Transmembrane helix</keyword>
<keyword id="KW-0813">Transport</keyword>
<name>QCR9_CANAL</name>
<gene>
    <name evidence="7" type="primary">QCR9</name>
    <name type="ordered locus">CAALFM_C402890CA</name>
    <name type="ordered locus">orf19.2707.1</name>
</gene>
<sequence>MLTVLGRLLERNSIYVATIFGGAFAFQGFFDVAVNKWWEEHNKAKLWKNVKGKFLEGEGEEEDDE</sequence>
<organism>
    <name type="scientific">Candida albicans (strain SC5314 / ATCC MYA-2876)</name>
    <name type="common">Yeast</name>
    <dbReference type="NCBI Taxonomy" id="237561"/>
    <lineage>
        <taxon>Eukaryota</taxon>
        <taxon>Fungi</taxon>
        <taxon>Dikarya</taxon>
        <taxon>Ascomycota</taxon>
        <taxon>Saccharomycotina</taxon>
        <taxon>Pichiomycetes</taxon>
        <taxon>Debaryomycetaceae</taxon>
        <taxon>Candida/Lodderomyces clade</taxon>
        <taxon>Candida</taxon>
    </lineage>
</organism>
<dbReference type="EMBL" id="CP017626">
    <property type="protein sequence ID" value="AOW29055.1"/>
    <property type="molecule type" value="Genomic_DNA"/>
</dbReference>
<dbReference type="RefSeq" id="XP_019330916.1">
    <property type="nucleotide sequence ID" value="XM_019475371.1"/>
</dbReference>
<dbReference type="PDB" id="7RJA">
    <property type="method" value="EM"/>
    <property type="resolution" value="3.00 A"/>
    <property type="chains" value="I/S=1-65"/>
</dbReference>
<dbReference type="PDB" id="7RJB">
    <property type="method" value="EM"/>
    <property type="resolution" value="3.20 A"/>
    <property type="chains" value="I=1-65"/>
</dbReference>
<dbReference type="PDB" id="7RJC">
    <property type="method" value="EM"/>
    <property type="resolution" value="3.30 A"/>
    <property type="chains" value="I=17-55"/>
</dbReference>
<dbReference type="PDB" id="7RJD">
    <property type="method" value="EM"/>
    <property type="resolution" value="3.20 A"/>
    <property type="chains" value="I=1-65"/>
</dbReference>
<dbReference type="PDB" id="7RJE">
    <property type="method" value="EM"/>
    <property type="resolution" value="3.30 A"/>
    <property type="chains" value="I/R=1-65"/>
</dbReference>
<dbReference type="PDBsum" id="7RJA"/>
<dbReference type="PDBsum" id="7RJB"/>
<dbReference type="PDBsum" id="7RJC"/>
<dbReference type="PDBsum" id="7RJD"/>
<dbReference type="PDBsum" id="7RJE"/>
<dbReference type="EMDB" id="EMD-24482"/>
<dbReference type="EMDB" id="EMD-24483"/>
<dbReference type="EMDB" id="EMD-24484"/>
<dbReference type="EMDB" id="EMD-24485"/>
<dbReference type="EMDB" id="EMD-24486"/>
<dbReference type="SMR" id="A0A1D8PLP3"/>
<dbReference type="FunCoup" id="A0A1D8PLP3">
    <property type="interactions" value="327"/>
</dbReference>
<dbReference type="STRING" id="237561.A0A1D8PLP3"/>
<dbReference type="EnsemblFungi" id="C4_02890C_A-T">
    <property type="protein sequence ID" value="C4_02890C_A-T-p1"/>
    <property type="gene ID" value="C4_02890C_A"/>
</dbReference>
<dbReference type="GeneID" id="30515251"/>
<dbReference type="KEGG" id="cal:CAALFM_C402890CA"/>
<dbReference type="CGD" id="CAL0000181035">
    <property type="gene designation" value="QCR9"/>
</dbReference>
<dbReference type="VEuPathDB" id="FungiDB:C4_02890C_A"/>
<dbReference type="eggNOG" id="KOG3494">
    <property type="taxonomic scope" value="Eukaryota"/>
</dbReference>
<dbReference type="InParanoid" id="A0A1D8PLP3"/>
<dbReference type="OMA" id="ANAGMQW"/>
<dbReference type="Proteomes" id="UP000000559">
    <property type="component" value="Chromosome 4"/>
</dbReference>
<dbReference type="GO" id="GO:0005743">
    <property type="term" value="C:mitochondrial inner membrane"/>
    <property type="evidence" value="ECO:0007669"/>
    <property type="project" value="UniProtKB-SubCell"/>
</dbReference>
<dbReference type="GO" id="GO:0005886">
    <property type="term" value="C:plasma membrane"/>
    <property type="evidence" value="ECO:0000314"/>
    <property type="project" value="CGD"/>
</dbReference>
<dbReference type="GO" id="GO:0045275">
    <property type="term" value="C:respiratory chain complex III"/>
    <property type="evidence" value="ECO:0000318"/>
    <property type="project" value="GO_Central"/>
</dbReference>
<dbReference type="GO" id="GO:0008121">
    <property type="term" value="F:ubiquinol-cytochrome-c reductase activity"/>
    <property type="evidence" value="ECO:0007669"/>
    <property type="project" value="EnsemblFungi"/>
</dbReference>
<dbReference type="GO" id="GO:0006122">
    <property type="term" value="P:mitochondrial electron transport, ubiquinol to cytochrome c"/>
    <property type="evidence" value="ECO:0000318"/>
    <property type="project" value="GO_Central"/>
</dbReference>
<dbReference type="GO" id="GO:0034551">
    <property type="term" value="P:mitochondrial respiratory chain complex III assembly"/>
    <property type="evidence" value="ECO:0007669"/>
    <property type="project" value="EnsemblFungi"/>
</dbReference>
<dbReference type="FunFam" id="1.20.5.260:FF:000001">
    <property type="entry name" value="Cytochrome b-c1 complex subunit 9"/>
    <property type="match status" value="1"/>
</dbReference>
<dbReference type="Gene3D" id="1.20.5.260">
    <property type="entry name" value="Cytochrome b-c1 complex subunit 9"/>
    <property type="match status" value="1"/>
</dbReference>
<dbReference type="InterPro" id="IPR008027">
    <property type="entry name" value="QCR9"/>
</dbReference>
<dbReference type="InterPro" id="IPR036656">
    <property type="entry name" value="QCR9_sf"/>
</dbReference>
<dbReference type="PANTHER" id="PTHR12980:SF0">
    <property type="entry name" value="CYTOCHROME B-C1 COMPLEX SUBUNIT 9"/>
    <property type="match status" value="1"/>
</dbReference>
<dbReference type="PANTHER" id="PTHR12980">
    <property type="entry name" value="UBIQUINOL-CYTOCHROME C REDUCTASE COMPLEX, SUBUNIT X"/>
    <property type="match status" value="1"/>
</dbReference>
<dbReference type="Pfam" id="PF05365">
    <property type="entry name" value="UCR_UQCRX_QCR9"/>
    <property type="match status" value="1"/>
</dbReference>
<dbReference type="SUPFAM" id="SSF81514">
    <property type="entry name" value="Subunit X (non-heme 7 kDa protein) of cytochrome bc1 complex (Ubiquinol-cytochrome c reductase)"/>
    <property type="match status" value="1"/>
</dbReference>
<protein>
    <recommendedName>
        <fullName evidence="7">Cytochrome b-c1 complex subunit 9, mitochondrial</fullName>
    </recommendedName>
    <alternativeName>
        <fullName evidence="7">Complex III subunit 9</fullName>
    </alternativeName>
</protein>
<evidence type="ECO:0000250" key="1">
    <source>
        <dbReference type="UniProtKB" id="P22289"/>
    </source>
</evidence>
<evidence type="ECO:0000255" key="2"/>
<evidence type="ECO:0000269" key="3">
    <source>
    </source>
</evidence>
<evidence type="ECO:0000269" key="4">
    <source>
    </source>
</evidence>
<evidence type="ECO:0000269" key="5">
    <source>
    </source>
</evidence>
<evidence type="ECO:0000269" key="6">
    <source>
    </source>
</evidence>
<evidence type="ECO:0000303" key="7">
    <source>
    </source>
</evidence>
<evidence type="ECO:0000305" key="8"/>
<evidence type="ECO:0007744" key="9">
    <source>
        <dbReference type="PDB" id="7RJA"/>
    </source>
</evidence>
<evidence type="ECO:0007744" key="10">
    <source>
        <dbReference type="PDB" id="7RJB"/>
    </source>
</evidence>
<evidence type="ECO:0007744" key="11">
    <source>
        <dbReference type="PDB" id="7RJC"/>
    </source>
</evidence>
<evidence type="ECO:0007744" key="12">
    <source>
        <dbReference type="PDB" id="7RJD"/>
    </source>
</evidence>
<evidence type="ECO:0007744" key="13">
    <source>
        <dbReference type="PDB" id="7RJE"/>
    </source>
</evidence>
<evidence type="ECO:0007829" key="14">
    <source>
        <dbReference type="PDB" id="7RJA"/>
    </source>
</evidence>
<reference key="1">
    <citation type="journal article" date="2004" name="Proc. Natl. Acad. Sci. U.S.A.">
        <title>The diploid genome sequence of Candida albicans.</title>
        <authorList>
            <person name="Jones T."/>
            <person name="Federspiel N.A."/>
            <person name="Chibana H."/>
            <person name="Dungan J."/>
            <person name="Kalman S."/>
            <person name="Magee B.B."/>
            <person name="Newport G."/>
            <person name="Thorstenson Y.R."/>
            <person name="Agabian N."/>
            <person name="Magee P.T."/>
            <person name="Davis R.W."/>
            <person name="Scherer S."/>
        </authorList>
    </citation>
    <scope>NUCLEOTIDE SEQUENCE [LARGE SCALE GENOMIC DNA]</scope>
    <source>
        <strain>SC5314 / ATCC MYA-2876</strain>
    </source>
</reference>
<reference key="2">
    <citation type="journal article" date="2007" name="Genome Biol.">
        <title>Assembly of the Candida albicans genome into sixteen supercontigs aligned on the eight chromosomes.</title>
        <authorList>
            <person name="van het Hoog M."/>
            <person name="Rast T.J."/>
            <person name="Martchenko M."/>
            <person name="Grindle S."/>
            <person name="Dignard D."/>
            <person name="Hogues H."/>
            <person name="Cuomo C."/>
            <person name="Berriman M."/>
            <person name="Scherer S."/>
            <person name="Magee B.B."/>
            <person name="Whiteway M."/>
            <person name="Chibana H."/>
            <person name="Nantel A."/>
            <person name="Magee P.T."/>
        </authorList>
    </citation>
    <scope>GENOME REANNOTATION</scope>
    <source>
        <strain>SC5314 / ATCC MYA-2876</strain>
    </source>
</reference>
<reference key="3">
    <citation type="journal article" date="2013" name="Genome Biol.">
        <title>Assembly of a phased diploid Candida albicans genome facilitates allele-specific measurements and provides a simple model for repeat and indel structure.</title>
        <authorList>
            <person name="Muzzey D."/>
            <person name="Schwartz K."/>
            <person name="Weissman J.S."/>
            <person name="Sherlock G."/>
        </authorList>
    </citation>
    <scope>NUCLEOTIDE SEQUENCE [LARGE SCALE GENOMIC DNA]</scope>
    <scope>GENOME REANNOTATION</scope>
    <source>
        <strain>SC5314 / ATCC MYA-2876</strain>
    </source>
</reference>
<reference key="4">
    <citation type="journal article" date="2005" name="Mol. Biol. Cell">
        <title>Global roles of Ssn6 in Tup1- and Nrg1-dependent gene regulation in the fungal pathogen, Candida albicans.</title>
        <authorList>
            <person name="Garcia-Sanchez S."/>
            <person name="Mavor A.L."/>
            <person name="Russell C.L."/>
            <person name="Argimon S."/>
            <person name="Dennison P."/>
            <person name="Enjalbert B."/>
            <person name="Brown A.J."/>
        </authorList>
    </citation>
    <scope>INDUCTION</scope>
</reference>
<reference key="5">
    <citation type="journal article" date="2009" name="Proteomics">
        <title>Analysis of Candida albicans plasma membrane proteome.</title>
        <authorList>
            <person name="Cabezon V."/>
            <person name="Llama-Palacios A."/>
            <person name="Nombela C."/>
            <person name="Monteoliva L."/>
            <person name="Gil C."/>
        </authorList>
    </citation>
    <scope>SUBCELLULAR LOCATION</scope>
</reference>
<reference key="6">
    <citation type="journal article" date="2023" name="Front. Cell. Infect. Microbiol.">
        <title>QCR7 affects the virulence of Candida albicans and the uptake of multiple carbon sources present in different host niches.</title>
        <authorList>
            <person name="Zeng L."/>
            <person name="Huang Y."/>
            <person name="Tan J."/>
            <person name="Peng J."/>
            <person name="Hu N."/>
            <person name="Liu Q."/>
            <person name="Cao Y."/>
            <person name="Zhang Y."/>
            <person name="Chen J."/>
            <person name="Huang X."/>
        </authorList>
    </citation>
    <scope>FUNCTION</scope>
    <scope>DISRUPTION PHENOTYPE</scope>
</reference>
<reference evidence="9 10 11 12 13" key="7">
    <citation type="journal article" date="2022" name="Structure">
        <title>Rieske head domain dynamics and indazole-derivative inhibition of Candida albicans complex III.</title>
        <authorList>
            <person name="Di Trani J.M."/>
            <person name="Liu Z."/>
            <person name="Whitesell L."/>
            <person name="Brzezinski P."/>
            <person name="Cowen L.E."/>
            <person name="Rubinstein J.L."/>
        </authorList>
    </citation>
    <scope>STRUCTURE BY ELECTRON MICROSCOPY (3.00 ANGSTROMS) OF THE HOMODIMERIC RESPIRATORY COMPLEX III</scope>
    <scope>FUNCTION</scope>
    <scope>SUBUNIT</scope>
</reference>
<accession>A0A1D8PLP3</accession>
<feature type="chain" id="PRO_0000459233" description="Cytochrome b-c1 complex subunit 9, mitochondrial">
    <location>
        <begin position="1"/>
        <end position="65"/>
    </location>
</feature>
<feature type="transmembrane region" description="Helical" evidence="2">
    <location>
        <begin position="14"/>
        <end position="34"/>
    </location>
</feature>
<feature type="helix" evidence="14">
    <location>
        <begin position="18"/>
        <end position="41"/>
    </location>
</feature>
<feature type="turn" evidence="14">
    <location>
        <begin position="43"/>
        <end position="45"/>
    </location>
</feature>
<feature type="helix" evidence="14">
    <location>
        <begin position="47"/>
        <end position="54"/>
    </location>
</feature>
<comment type="function">
    <text evidence="5 6">Component of the ubiquinol-cytochrome c oxidoreductase, a multisubunit transmembrane complex that is part of the mitochondrial electron transport chain which drives oxidative phosphorylation (PubMed:34525326, PubMed:36923588). The complex plays an important role in the uptake of multiple carbon sources present in different host niches (PubMed:36923588).</text>
</comment>
<comment type="subunit">
    <text evidence="5">Component of the ubiquinol-cytochrome c oxidoreductase (cytochrome b-c1 complex, complex III, CIII), a multisubunit enzyme composed of 10 subunits. The complex is composed of 3 respiratory subunits cytochrome b (COB), cytochrome c1 (CYT1) and Rieske protein (RIP1), 2 core protein subunits COR1 and QCR2, and 5 low-molecular weight protein subunits QCR6, QCR7, QCR8, QCR9 and QCR10. The complex exists as an obligatory dimer and forms supercomplexes (SCs) in the inner mitochondrial membrane with a monomer or a dimer of cytochrome c oxidase (complex IV, CIV), resulting in 2 different assemblies (supercomplexes III(2)IV and III(2)IV(2)).</text>
</comment>
<comment type="subcellular location">
    <subcellularLocation>
        <location evidence="4">Membrane</location>
        <topology evidence="2">Single-pass membrane protein</topology>
    </subcellularLocation>
    <subcellularLocation>
        <location evidence="1">Mitochondrion inner membrane</location>
        <topology evidence="1">Single-pass membrane protein</topology>
    </subcellularLocation>
</comment>
<comment type="induction">
    <text evidence="3">Expression is also regulated by SSN6.</text>
</comment>
<comment type="disruption phenotype">
    <text evidence="6">Leads to decreased vegetative growth on several carbon sources such as citrate.</text>
</comment>
<comment type="similarity">
    <text evidence="8">Belongs to the UQCR10/QCR9 family.</text>
</comment>
<proteinExistence type="evidence at protein level"/>